<organism>
    <name type="scientific">Mycobacterium tuberculosis (strain ATCC 25618 / H37Rv)</name>
    <dbReference type="NCBI Taxonomy" id="83332"/>
    <lineage>
        <taxon>Bacteria</taxon>
        <taxon>Bacillati</taxon>
        <taxon>Actinomycetota</taxon>
        <taxon>Actinomycetes</taxon>
        <taxon>Mycobacteriales</taxon>
        <taxon>Mycobacteriaceae</taxon>
        <taxon>Mycobacterium</taxon>
        <taxon>Mycobacterium tuberculosis complex</taxon>
    </lineage>
</organism>
<gene>
    <name type="primary">mtp</name>
    <name evidence="6" type="ordered locus">Rv3312A</name>
</gene>
<evidence type="ECO:0000255" key="1"/>
<evidence type="ECO:0000256" key="2">
    <source>
        <dbReference type="SAM" id="MobiDB-lite"/>
    </source>
</evidence>
<evidence type="ECO:0000269" key="3">
    <source>
    </source>
</evidence>
<evidence type="ECO:0000269" key="4">
    <source>
    </source>
</evidence>
<evidence type="ECO:0000305" key="5"/>
<evidence type="ECO:0000312" key="6">
    <source>
        <dbReference type="EMBL" id="CCP46132.1"/>
    </source>
</evidence>
<comment type="function">
    <text evidence="4">Structural subunit of M.tuberculosis pili (MTP), which are thin (2- to 3-nm wide), flexible, coiled-coil, aggregative fibers. Has a strong affinity for laminin but lacks significant binding affinity for fibronectin or type IV collagen. Mediates adhesion to the extracellular matrix, an event that would facilitate direct interaction with the host epithelium during infection in the lung or other tissues.</text>
</comment>
<comment type="subunit">
    <text evidence="4">Forms a homomer composed of subunits assembled in a large structure.</text>
</comment>
<comment type="subcellular location">
    <subcellularLocation>
        <location evidence="4">Fimbrium</location>
    </subcellularLocation>
    <text>Part of the pili surface structure.</text>
</comment>
<comment type="developmental stage">
    <text evidence="4">Is produced during infection of the human host.</text>
</comment>
<comment type="induction">
    <text evidence="3">Positively regulated by PhoP.</text>
</comment>
<comment type="similarity">
    <text evidence="5">Belongs to the mycobacterial pilin family.</text>
</comment>
<dbReference type="EMBL" id="AL123456">
    <property type="protein sequence ID" value="CCP46132.1"/>
    <property type="molecule type" value="Genomic_DNA"/>
</dbReference>
<dbReference type="RefSeq" id="WP_003417257.1">
    <property type="nucleotide sequence ID" value="NZ_NVQJ01000003.1"/>
</dbReference>
<dbReference type="RefSeq" id="YP_177957.1">
    <property type="nucleotide sequence ID" value="NC_000962.3"/>
</dbReference>
<dbReference type="STRING" id="83332.Rv3312A"/>
<dbReference type="PaxDb" id="83332-Rv3312A"/>
<dbReference type="GeneID" id="3205113"/>
<dbReference type="GeneID" id="45427312"/>
<dbReference type="KEGG" id="mtu:Rv3312A"/>
<dbReference type="KEGG" id="mtv:RVBD_3312A"/>
<dbReference type="TubercuList" id="Rv3312A"/>
<dbReference type="eggNOG" id="ENOG5031U6Y">
    <property type="taxonomic scope" value="Bacteria"/>
</dbReference>
<dbReference type="InParanoid" id="P9WI87"/>
<dbReference type="OrthoDB" id="4732178at2"/>
<dbReference type="PHI-base" id="PHI:7452"/>
<dbReference type="Proteomes" id="UP000001584">
    <property type="component" value="Chromosome"/>
</dbReference>
<dbReference type="GO" id="GO:0009289">
    <property type="term" value="C:pilus"/>
    <property type="evidence" value="ECO:0000314"/>
    <property type="project" value="MTBBASE"/>
</dbReference>
<dbReference type="GO" id="GO:0007155">
    <property type="term" value="P:cell adhesion"/>
    <property type="evidence" value="ECO:0007669"/>
    <property type="project" value="UniProtKB-KW"/>
</dbReference>
<dbReference type="GO" id="GO:0009297">
    <property type="term" value="P:pilus assembly"/>
    <property type="evidence" value="ECO:0000315"/>
    <property type="project" value="MTBBASE"/>
</dbReference>
<proteinExistence type="evidence at protein level"/>
<protein>
    <recommendedName>
        <fullName>Pilin</fullName>
    </recommendedName>
    <alternativeName>
        <fullName>Pili structural subunit</fullName>
    </alternativeName>
</protein>
<sequence>MYRFACRTLMLAACILATGVAGLGVGAQSAAQTAPVPDYYWCPGQPFDPAWGPNWDPYTCHDDFHRDSDGPDHSRDYPGPILEGPVLDDPGAAPPPPAAGGGA</sequence>
<reference key="1">
    <citation type="journal article" date="1998" name="Nature">
        <title>Deciphering the biology of Mycobacterium tuberculosis from the complete genome sequence.</title>
        <authorList>
            <person name="Cole S.T."/>
            <person name="Brosch R."/>
            <person name="Parkhill J."/>
            <person name="Garnier T."/>
            <person name="Churcher C.M."/>
            <person name="Harris D.E."/>
            <person name="Gordon S.V."/>
            <person name="Eiglmeier K."/>
            <person name="Gas S."/>
            <person name="Barry C.E. III"/>
            <person name="Tekaia F."/>
            <person name="Badcock K."/>
            <person name="Basham D."/>
            <person name="Brown D."/>
            <person name="Chillingworth T."/>
            <person name="Connor R."/>
            <person name="Davies R.M."/>
            <person name="Devlin K."/>
            <person name="Feltwell T."/>
            <person name="Gentles S."/>
            <person name="Hamlin N."/>
            <person name="Holroyd S."/>
            <person name="Hornsby T."/>
            <person name="Jagels K."/>
            <person name="Krogh A."/>
            <person name="McLean J."/>
            <person name="Moule S."/>
            <person name="Murphy L.D."/>
            <person name="Oliver S."/>
            <person name="Osborne J."/>
            <person name="Quail M.A."/>
            <person name="Rajandream M.A."/>
            <person name="Rogers J."/>
            <person name="Rutter S."/>
            <person name="Seeger K."/>
            <person name="Skelton S."/>
            <person name="Squares S."/>
            <person name="Squares R."/>
            <person name="Sulston J.E."/>
            <person name="Taylor K."/>
            <person name="Whitehead S."/>
            <person name="Barrell B.G."/>
        </authorList>
    </citation>
    <scope>NUCLEOTIDE SEQUENCE [LARGE SCALE GENOMIC DNA]</scope>
    <source>
        <strain>ATCC 25618 / H37Rv</strain>
    </source>
</reference>
<reference key="2">
    <citation type="journal article" date="2007" name="Proc. Natl. Acad. Sci. U.S.A.">
        <title>Mycobacterium tuberculosis produces pili during human infection.</title>
        <authorList>
            <person name="Alteri C.J."/>
            <person name="Xicohtencatl-Cortes J."/>
            <person name="Hess S."/>
            <person name="Caballero-Olin G."/>
            <person name="Giron J.A."/>
            <person name="Friedman R.L."/>
        </authorList>
    </citation>
    <scope>PROTEIN SEQUENCE OF 90-103</scope>
    <scope>FUNCTION</scope>
    <scope>SUBUNIT</scope>
    <scope>SUBCELLULAR LOCATION</scope>
    <scope>DEVELOPMENTAL STAGE</scope>
    <scope>IDENTIFICATION BY MASS SPECTROMETRY</scope>
    <source>
        <strain>ATCC 25618 / H37Rv</strain>
    </source>
</reference>
<reference key="3">
    <citation type="journal article" date="2006" name="Mol. Microbiol.">
        <title>The Mycobacterium tuberculosis PhoPR two-component system regulates genes essential for virulence and complex lipid biosynthesis.</title>
        <authorList>
            <person name="Walters S.B."/>
            <person name="Dubnau E."/>
            <person name="Kolesnikova I."/>
            <person name="Laval F."/>
            <person name="Daffe M."/>
            <person name="Smith I."/>
        </authorList>
    </citation>
    <scope>INDUCTION BY PHOP</scope>
    <source>
        <strain>ATCC 25618 / H37Rv</strain>
    </source>
</reference>
<reference key="4">
    <citation type="journal article" date="2011" name="Mol. Cell. Proteomics">
        <title>Proteogenomic analysis of Mycobacterium tuberculosis by high resolution mass spectrometry.</title>
        <authorList>
            <person name="Kelkar D.S."/>
            <person name="Kumar D."/>
            <person name="Kumar P."/>
            <person name="Balakrishnan L."/>
            <person name="Muthusamy B."/>
            <person name="Yadav A.K."/>
            <person name="Shrivastava P."/>
            <person name="Marimuthu A."/>
            <person name="Anand S."/>
            <person name="Sundaram H."/>
            <person name="Kingsbury R."/>
            <person name="Harsha H.C."/>
            <person name="Nair B."/>
            <person name="Prasad T.S."/>
            <person name="Chauhan D.S."/>
            <person name="Katoch K."/>
            <person name="Katoch V.M."/>
            <person name="Kumar P."/>
            <person name="Chaerkady R."/>
            <person name="Ramachandran S."/>
            <person name="Dash D."/>
            <person name="Pandey A."/>
        </authorList>
    </citation>
    <scope>IDENTIFICATION BY MASS SPECTROMETRY [LARGE SCALE ANALYSIS]</scope>
    <source>
        <strain>ATCC 25618 / H37Rv</strain>
    </source>
</reference>
<name>PILIN_MYCTU</name>
<feature type="signal peptide" evidence="1">
    <location>
        <begin position="1"/>
        <end position="30"/>
    </location>
</feature>
<feature type="chain" id="PRO_0000314591" description="Pilin">
    <location>
        <begin position="31"/>
        <end position="103"/>
    </location>
</feature>
<feature type="region of interest" description="Disordered" evidence="2">
    <location>
        <begin position="61"/>
        <end position="103"/>
    </location>
</feature>
<feature type="compositionally biased region" description="Basic and acidic residues" evidence="2">
    <location>
        <begin position="61"/>
        <end position="76"/>
    </location>
</feature>
<feature type="compositionally biased region" description="Pro residues" evidence="2">
    <location>
        <begin position="92"/>
        <end position="103"/>
    </location>
</feature>
<keyword id="KW-0130">Cell adhesion</keyword>
<keyword id="KW-0903">Direct protein sequencing</keyword>
<keyword id="KW-0281">Fimbrium</keyword>
<keyword id="KW-1185">Reference proteome</keyword>
<keyword id="KW-0732">Signal</keyword>
<keyword id="KW-0843">Virulence</keyword>
<accession>P9WI87</accession>
<accession>L0TC61</accession>
<accession>Q6MWY5</accession>
<accession>Q8VJ33</accession>